<organism>
    <name type="scientific">Influenza A virus (strain A/Teal/China/2978.1/2002 H5N1 genotype W)</name>
    <dbReference type="NCBI Taxonomy" id="284215"/>
    <lineage>
        <taxon>Viruses</taxon>
        <taxon>Riboviria</taxon>
        <taxon>Orthornavirae</taxon>
        <taxon>Negarnaviricota</taxon>
        <taxon>Polyploviricotina</taxon>
        <taxon>Insthoviricetes</taxon>
        <taxon>Articulavirales</taxon>
        <taxon>Orthomyxoviridae</taxon>
        <taxon>Alphainfluenzavirus</taxon>
        <taxon>Alphainfluenzavirus influenzae</taxon>
        <taxon>Influenza A virus</taxon>
    </lineage>
</organism>
<organismHost>
    <name type="scientific">Aves</name>
    <dbReference type="NCBI Taxonomy" id="8782"/>
</organismHost>
<organismHost>
    <name type="scientific">Felis catus</name>
    <name type="common">Cat</name>
    <name type="synonym">Felis silvestris catus</name>
    <dbReference type="NCBI Taxonomy" id="9685"/>
</organismHost>
<organismHost>
    <name type="scientific">Homo sapiens</name>
    <name type="common">Human</name>
    <dbReference type="NCBI Taxonomy" id="9606"/>
</organismHost>
<organismHost>
    <name type="scientific">Panthera pardus</name>
    <name type="common">Leopard</name>
    <name type="synonym">Felis pardus</name>
    <dbReference type="NCBI Taxonomy" id="9691"/>
</organismHost>
<organismHost>
    <name type="scientific">Panthera tigris</name>
    <name type="common">Tiger</name>
    <dbReference type="NCBI Taxonomy" id="9694"/>
</organismHost>
<organismHost>
    <name type="scientific">Sus scrofa</name>
    <name type="common">Pig</name>
    <dbReference type="NCBI Taxonomy" id="9823"/>
</organismHost>
<proteinExistence type="inferred from homology"/>
<comment type="function">
    <text evidence="1">Plays critical roles in virus replication, from virus entry and uncoating to assembly and budding of the virus particle. M1 binding to ribonucleocapsids (RNPs) in nucleus seems to inhibit viral transcription. Interaction of viral NEP with M1-RNP is thought to promote nuclear export of the complex, which is targeted to the virion assembly site at the apical plasma membrane in polarized epithelial cells. Interactions with NA and HA may bring M1, a non-raft-associated protein, into lipid rafts. Forms a continuous shell on the inner side of the lipid bilayer in virion, where it binds the RNP. During virus entry into cell, the M2 ion channel acidifies the internal virion core, inducing M1 dissociation from the RNP. M1-free RNPs are transported to the nucleus, where viral transcription and replication can take place (By similarity).</text>
</comment>
<comment type="function">
    <text evidence="1">Determines the virion's shape: spherical or filamentous. Clinical isolates of influenza are characterized by the presence of significant proportion of filamentous virions, whereas after multiple passage on eggs or cell culture, virions have only spherical morphology. Filamentous virions are thought to be important to infect neighboring cells, and spherical virions more suited to spread through aerosol between hosts organisms (By similarity).</text>
</comment>
<comment type="subunit">
    <text evidence="1">Homodimer and homomultimer. Interacts with NEP (By similarity). Binds ribonucleocapsid by both interacting with genomic RNA and NP protein. May interact with HA and NA (By similarity). Cannot bind NP without genomic RNA.</text>
</comment>
<comment type="subcellular location">
    <subcellularLocation>
        <location>Virion membrane</location>
        <topology>Multi-pass membrane protein</topology>
    </subcellularLocation>
    <subcellularLocation>
        <location evidence="1">Host nucleus</location>
    </subcellularLocation>
</comment>
<comment type="alternative products">
    <event type="alternative splicing"/>
    <isoform>
        <id>Q6DPQ6-1</id>
        <name>M1</name>
        <sequence type="displayed"/>
    </isoform>
    <isoform>
        <id>Q6DPQ7-1</id>
        <name>M2</name>
        <sequence type="external"/>
    </isoform>
    <text>Only the first 9 residues are shared by the 2 isoforms.</text>
</comment>
<comment type="miscellaneous">
    <text>Most abundant protein in virion. When expressed alone can form virus-like particles in transfected cells.</text>
</comment>
<comment type="similarity">
    <text evidence="2">Belongs to the influenza viruses Matrix protein M1 family.</text>
</comment>
<reference key="1">
    <citation type="journal article" date="2004" name="Nature">
        <title>Genesis of a highly pathogenic and potentially pandemic H5N1 influenza virus in eastern Asia.</title>
        <authorList>
            <person name="Li K.S."/>
            <person name="Guan Y."/>
            <person name="Wang J."/>
            <person name="Smith G.J.D."/>
            <person name="Xu K.M."/>
            <person name="Duan L."/>
            <person name="Rahardjo A.P."/>
            <person name="Puthavathana P."/>
            <person name="Buranathai C."/>
            <person name="Nguyen T.D."/>
            <person name="Estoepangestie A.T.S."/>
            <person name="Chaisingh A."/>
            <person name="Auewarakul P."/>
            <person name="Long H.T."/>
            <person name="Hanh N.T.H."/>
            <person name="Webby R.J."/>
            <person name="Poon L.L.M."/>
            <person name="Chen H."/>
            <person name="Shortridge K.F."/>
            <person name="Yuen K.Y."/>
            <person name="Webster R.G."/>
            <person name="Peiris J.S.M."/>
        </authorList>
    </citation>
    <scope>NUCLEOTIDE SEQUENCE [GENOMIC RNA]</scope>
</reference>
<feature type="chain" id="PRO_0000311617" description="Matrix protein 1">
    <location>
        <begin position="1" status="less than"/>
        <end position="250"/>
    </location>
</feature>
<feature type="region of interest" description="Membrane-binding" evidence="1">
    <location>
        <begin position="1" status="less than"/>
        <end position="162"/>
    </location>
</feature>
<feature type="region of interest" description="RNP-binding" evidence="1">
    <location>
        <begin position="163"/>
        <end position="250"/>
    </location>
</feature>
<feature type="short sequence motif" description="Nuclear localization signal" evidence="1">
    <location>
        <begin position="99"/>
        <end position="103"/>
    </location>
</feature>
<feature type="non-terminal residue">
    <location>
        <position position="1"/>
    </location>
</feature>
<protein>
    <recommendedName>
        <fullName>Matrix protein 1</fullName>
        <shortName>M1</shortName>
    </recommendedName>
</protein>
<sequence>LLTEVETYVLSIIPSGPLKAEIAQKLEDVFAGKNTDLEALMEWLKTRPILSPLTKGILGFVFTLTVPSERGLQRRRFVQNALNGNGDPNNMDRAVKLYKKLKREITFHGAKEVALSYSTGALASCMGLIYNRMGTVTTEVAFGLVCATCEQIADSQHRSHRQMATITNPLIRHENRMVLASTTAKAMEQMAGSSEQAAEAMEVANQARQMVQAMRTIGTHPNSSAGLRDNLLENLQAYQKRMGVQMQRFK</sequence>
<dbReference type="EMBL" id="AY651417">
    <property type="protein sequence ID" value="AAT70587.1"/>
    <property type="molecule type" value="Genomic_RNA"/>
</dbReference>
<dbReference type="SMR" id="Q6DPQ6"/>
<dbReference type="GO" id="GO:0042025">
    <property type="term" value="C:host cell nucleus"/>
    <property type="evidence" value="ECO:0007669"/>
    <property type="project" value="UniProtKB-SubCell"/>
</dbReference>
<dbReference type="GO" id="GO:0016020">
    <property type="term" value="C:membrane"/>
    <property type="evidence" value="ECO:0007669"/>
    <property type="project" value="UniProtKB-KW"/>
</dbReference>
<dbReference type="GO" id="GO:0055036">
    <property type="term" value="C:virion membrane"/>
    <property type="evidence" value="ECO:0007669"/>
    <property type="project" value="UniProtKB-SubCell"/>
</dbReference>
<dbReference type="GO" id="GO:0003723">
    <property type="term" value="F:RNA binding"/>
    <property type="evidence" value="ECO:0007669"/>
    <property type="project" value="UniProtKB-KW"/>
</dbReference>
<dbReference type="GO" id="GO:0039660">
    <property type="term" value="F:structural constituent of virion"/>
    <property type="evidence" value="ECO:0007669"/>
    <property type="project" value="UniProtKB-KW"/>
</dbReference>
<dbReference type="FunFam" id="1.10.10.180:FF:000001">
    <property type="entry name" value="Matrix protein 1"/>
    <property type="match status" value="1"/>
</dbReference>
<dbReference type="FunFam" id="1.20.91.10:FF:000001">
    <property type="entry name" value="Matrix protein 1"/>
    <property type="match status" value="1"/>
</dbReference>
<dbReference type="Gene3D" id="1.10.10.180">
    <property type="match status" value="1"/>
</dbReference>
<dbReference type="Gene3D" id="1.20.91.10">
    <property type="match status" value="1"/>
</dbReference>
<dbReference type="InterPro" id="IPR036039">
    <property type="entry name" value="Flu_matrix_M1"/>
</dbReference>
<dbReference type="InterPro" id="IPR013188">
    <property type="entry name" value="Flu_matrix_M1_C"/>
</dbReference>
<dbReference type="InterPro" id="IPR001561">
    <property type="entry name" value="Flu_matrix_M1_N"/>
</dbReference>
<dbReference type="InterPro" id="IPR015423">
    <property type="entry name" value="Flu_matrix_M1_N_sub1"/>
</dbReference>
<dbReference type="InterPro" id="IPR015799">
    <property type="entry name" value="Flu_matrix_M1_N_sub2"/>
</dbReference>
<dbReference type="Pfam" id="PF00598">
    <property type="entry name" value="Flu_M1"/>
    <property type="match status" value="1"/>
</dbReference>
<dbReference type="Pfam" id="PF08289">
    <property type="entry name" value="Flu_M1_C"/>
    <property type="match status" value="1"/>
</dbReference>
<dbReference type="SMART" id="SM00759">
    <property type="entry name" value="Flu_M1_C"/>
    <property type="match status" value="1"/>
</dbReference>
<dbReference type="SUPFAM" id="SSF48145">
    <property type="entry name" value="Influenza virus matrix protein M1"/>
    <property type="match status" value="1"/>
</dbReference>
<accession>Q6DPQ6</accession>
<keyword id="KW-0025">Alternative splicing</keyword>
<keyword id="KW-1048">Host nucleus</keyword>
<keyword id="KW-0472">Membrane</keyword>
<keyword id="KW-0694">RNA-binding</keyword>
<keyword id="KW-0468">Viral matrix protein</keyword>
<keyword id="KW-0946">Virion</keyword>
<evidence type="ECO:0000250" key="1"/>
<evidence type="ECO:0000305" key="2"/>
<gene>
    <name type="primary">M</name>
</gene>
<name>M1_I02A7</name>